<protein>
    <recommendedName>
        <fullName evidence="1">Small ribosomal subunit protein uS19</fullName>
    </recommendedName>
    <alternativeName>
        <fullName evidence="2">30S ribosomal protein S19</fullName>
    </alternativeName>
</protein>
<name>RS19_NITV9</name>
<dbReference type="EMBL" id="CP001197">
    <property type="protein sequence ID" value="ACL07044.1"/>
    <property type="molecule type" value="Genomic_DNA"/>
</dbReference>
<dbReference type="SMR" id="B8DNA0"/>
<dbReference type="STRING" id="883.DvMF_0083"/>
<dbReference type="KEGG" id="dvm:DvMF_0083"/>
<dbReference type="eggNOG" id="COG0185">
    <property type="taxonomic scope" value="Bacteria"/>
</dbReference>
<dbReference type="HOGENOM" id="CLU_144911_0_1_7"/>
<dbReference type="OrthoDB" id="9797833at2"/>
<dbReference type="GO" id="GO:0005737">
    <property type="term" value="C:cytoplasm"/>
    <property type="evidence" value="ECO:0007669"/>
    <property type="project" value="UniProtKB-ARBA"/>
</dbReference>
<dbReference type="GO" id="GO:0015935">
    <property type="term" value="C:small ribosomal subunit"/>
    <property type="evidence" value="ECO:0007669"/>
    <property type="project" value="InterPro"/>
</dbReference>
<dbReference type="GO" id="GO:0019843">
    <property type="term" value="F:rRNA binding"/>
    <property type="evidence" value="ECO:0007669"/>
    <property type="project" value="UniProtKB-UniRule"/>
</dbReference>
<dbReference type="GO" id="GO:0003735">
    <property type="term" value="F:structural constituent of ribosome"/>
    <property type="evidence" value="ECO:0007669"/>
    <property type="project" value="InterPro"/>
</dbReference>
<dbReference type="GO" id="GO:0000028">
    <property type="term" value="P:ribosomal small subunit assembly"/>
    <property type="evidence" value="ECO:0007669"/>
    <property type="project" value="TreeGrafter"/>
</dbReference>
<dbReference type="GO" id="GO:0006412">
    <property type="term" value="P:translation"/>
    <property type="evidence" value="ECO:0007669"/>
    <property type="project" value="UniProtKB-UniRule"/>
</dbReference>
<dbReference type="FunFam" id="3.30.860.10:FF:000001">
    <property type="entry name" value="30S ribosomal protein S19"/>
    <property type="match status" value="1"/>
</dbReference>
<dbReference type="Gene3D" id="3.30.860.10">
    <property type="entry name" value="30s Ribosomal Protein S19, Chain A"/>
    <property type="match status" value="1"/>
</dbReference>
<dbReference type="HAMAP" id="MF_00531">
    <property type="entry name" value="Ribosomal_uS19"/>
    <property type="match status" value="1"/>
</dbReference>
<dbReference type="InterPro" id="IPR002222">
    <property type="entry name" value="Ribosomal_uS19"/>
</dbReference>
<dbReference type="InterPro" id="IPR005732">
    <property type="entry name" value="Ribosomal_uS19_bac-type"/>
</dbReference>
<dbReference type="InterPro" id="IPR020934">
    <property type="entry name" value="Ribosomal_uS19_CS"/>
</dbReference>
<dbReference type="InterPro" id="IPR023575">
    <property type="entry name" value="Ribosomal_uS19_SF"/>
</dbReference>
<dbReference type="NCBIfam" id="TIGR01050">
    <property type="entry name" value="rpsS_bact"/>
    <property type="match status" value="1"/>
</dbReference>
<dbReference type="PANTHER" id="PTHR11880">
    <property type="entry name" value="RIBOSOMAL PROTEIN S19P FAMILY MEMBER"/>
    <property type="match status" value="1"/>
</dbReference>
<dbReference type="PANTHER" id="PTHR11880:SF8">
    <property type="entry name" value="SMALL RIBOSOMAL SUBUNIT PROTEIN US19M"/>
    <property type="match status" value="1"/>
</dbReference>
<dbReference type="Pfam" id="PF00203">
    <property type="entry name" value="Ribosomal_S19"/>
    <property type="match status" value="1"/>
</dbReference>
<dbReference type="PIRSF" id="PIRSF002144">
    <property type="entry name" value="Ribosomal_S19"/>
    <property type="match status" value="1"/>
</dbReference>
<dbReference type="PRINTS" id="PR00975">
    <property type="entry name" value="RIBOSOMALS19"/>
</dbReference>
<dbReference type="SUPFAM" id="SSF54570">
    <property type="entry name" value="Ribosomal protein S19"/>
    <property type="match status" value="1"/>
</dbReference>
<dbReference type="PROSITE" id="PS00323">
    <property type="entry name" value="RIBOSOMAL_S19"/>
    <property type="match status" value="1"/>
</dbReference>
<feature type="chain" id="PRO_1000127965" description="Small ribosomal subunit protein uS19">
    <location>
        <begin position="1"/>
        <end position="93"/>
    </location>
</feature>
<organism>
    <name type="scientific">Nitratidesulfovibrio vulgaris (strain DSM 19637 / Miyazaki F)</name>
    <name type="common">Desulfovibrio vulgaris</name>
    <dbReference type="NCBI Taxonomy" id="883"/>
    <lineage>
        <taxon>Bacteria</taxon>
        <taxon>Pseudomonadati</taxon>
        <taxon>Thermodesulfobacteriota</taxon>
        <taxon>Desulfovibrionia</taxon>
        <taxon>Desulfovibrionales</taxon>
        <taxon>Desulfovibrionaceae</taxon>
        <taxon>Nitratidesulfovibrio</taxon>
    </lineage>
</organism>
<keyword id="KW-0687">Ribonucleoprotein</keyword>
<keyword id="KW-0689">Ribosomal protein</keyword>
<keyword id="KW-0694">RNA-binding</keyword>
<keyword id="KW-0699">rRNA-binding</keyword>
<accession>B8DNA0</accession>
<proteinExistence type="inferred from homology"/>
<evidence type="ECO:0000255" key="1">
    <source>
        <dbReference type="HAMAP-Rule" id="MF_00531"/>
    </source>
</evidence>
<evidence type="ECO:0000305" key="2"/>
<sequence length="93" mass="10494">MPRSLKKGPFIDDHLIKKVELAVSNSDRRVIKTWSRRSTIAPEMVGLTFAVHNGKKFIPVFVTENMVGHKLGEFAPTRTFYGHAADKKSKAKK</sequence>
<reference key="1">
    <citation type="submission" date="2008-10" db="EMBL/GenBank/DDBJ databases">
        <title>Complete sequence of Desulfovibrio vulgaris str. 'Miyazaki F'.</title>
        <authorList>
            <person name="Lucas S."/>
            <person name="Copeland A."/>
            <person name="Lapidus A."/>
            <person name="Glavina del Rio T."/>
            <person name="Dalin E."/>
            <person name="Tice H."/>
            <person name="Bruce D."/>
            <person name="Goodwin L."/>
            <person name="Pitluck S."/>
            <person name="Sims D."/>
            <person name="Brettin T."/>
            <person name="Detter J.C."/>
            <person name="Han C."/>
            <person name="Larimer F."/>
            <person name="Land M."/>
            <person name="Hauser L."/>
            <person name="Kyrpides N."/>
            <person name="Mikhailova N."/>
            <person name="Hazen T.C."/>
            <person name="Richardson P."/>
        </authorList>
    </citation>
    <scope>NUCLEOTIDE SEQUENCE [LARGE SCALE GENOMIC DNA]</scope>
    <source>
        <strain>DSM 19637 / Miyazaki F</strain>
    </source>
</reference>
<gene>
    <name evidence="1" type="primary">rpsS</name>
    <name type="ordered locus">DvMF_0083</name>
</gene>
<comment type="function">
    <text evidence="1">Protein S19 forms a complex with S13 that binds strongly to the 16S ribosomal RNA.</text>
</comment>
<comment type="similarity">
    <text evidence="1">Belongs to the universal ribosomal protein uS19 family.</text>
</comment>